<proteinExistence type="inferred from homology"/>
<evidence type="ECO:0000250" key="1"/>
<evidence type="ECO:0000255" key="2">
    <source>
        <dbReference type="HAMAP-Rule" id="MF_00619"/>
    </source>
</evidence>
<evidence type="ECO:0000305" key="3"/>
<keyword id="KW-1185">Reference proteome</keyword>
<keyword id="KW-0687">Ribonucleoprotein</keyword>
<keyword id="KW-0689">Ribosomal protein</keyword>
<dbReference type="EMBL" id="U62737">
    <property type="protein sequence ID" value="AAB50399.1"/>
    <property type="molecule type" value="Genomic_DNA"/>
</dbReference>
<dbReference type="EMBL" id="CP000100">
    <property type="protein sequence ID" value="ABB58375.1"/>
    <property type="molecule type" value="Genomic_DNA"/>
</dbReference>
<dbReference type="RefSeq" id="WP_011244068.1">
    <property type="nucleotide sequence ID" value="NZ_JACJTX010000001.1"/>
</dbReference>
<dbReference type="SMR" id="O05161"/>
<dbReference type="STRING" id="1140.Synpcc7942_2345"/>
<dbReference type="PaxDb" id="1140-Synpcc7942_2345"/>
<dbReference type="KEGG" id="syf:Synpcc7942_2345"/>
<dbReference type="eggNOG" id="ENOG503137T">
    <property type="taxonomic scope" value="Bacteria"/>
</dbReference>
<dbReference type="HOGENOM" id="CLU_132693_1_0_3"/>
<dbReference type="OrthoDB" id="486850at2"/>
<dbReference type="BioCyc" id="SYNEL:SYNPCC7942_2345-MONOMER"/>
<dbReference type="Proteomes" id="UP000889800">
    <property type="component" value="Chromosome"/>
</dbReference>
<dbReference type="GO" id="GO:1990904">
    <property type="term" value="C:ribonucleoprotein complex"/>
    <property type="evidence" value="ECO:0007669"/>
    <property type="project" value="UniProtKB-KW"/>
</dbReference>
<dbReference type="GO" id="GO:0005840">
    <property type="term" value="C:ribosome"/>
    <property type="evidence" value="ECO:0007669"/>
    <property type="project" value="UniProtKB-KW"/>
</dbReference>
<dbReference type="GO" id="GO:0003735">
    <property type="term" value="F:structural constituent of ribosome"/>
    <property type="evidence" value="ECO:0007669"/>
    <property type="project" value="InterPro"/>
</dbReference>
<dbReference type="GO" id="GO:0006412">
    <property type="term" value="P:translation"/>
    <property type="evidence" value="ECO:0007669"/>
    <property type="project" value="UniProtKB-UniRule"/>
</dbReference>
<dbReference type="Gene3D" id="3.30.390.140">
    <property type="match status" value="1"/>
</dbReference>
<dbReference type="HAMAP" id="MF_00619">
    <property type="entry name" value="Ribosomal_plastid_cS23"/>
    <property type="match status" value="1"/>
</dbReference>
<dbReference type="InterPro" id="IPR038447">
    <property type="entry name" value="PSRP-3/Ycf65_sf"/>
</dbReference>
<dbReference type="InterPro" id="IPR006924">
    <property type="entry name" value="Ribosomal_PSRP3/Ycf65"/>
</dbReference>
<dbReference type="NCBIfam" id="NF002740">
    <property type="entry name" value="PRK02724.1"/>
    <property type="match status" value="1"/>
</dbReference>
<dbReference type="PANTHER" id="PTHR35108">
    <property type="entry name" value="30S RIBOSOMAL PROTEIN 3, CHLOROPLASTIC"/>
    <property type="match status" value="1"/>
</dbReference>
<dbReference type="PANTHER" id="PTHR35108:SF1">
    <property type="entry name" value="OS04G0461100 PROTEIN"/>
    <property type="match status" value="1"/>
</dbReference>
<dbReference type="Pfam" id="PF04839">
    <property type="entry name" value="PSRP-3_Ycf65"/>
    <property type="match status" value="1"/>
</dbReference>
<reference key="1">
    <citation type="submission" date="1996-07" db="EMBL/GenBank/DDBJ databases">
        <authorList>
            <person name="Ronen-Tarazi M."/>
            <person name="Kaplan A."/>
        </authorList>
    </citation>
    <scope>NUCLEOTIDE SEQUENCE [GENOMIC DNA]</scope>
    <source>
        <strain>ATCC 33912 / PCC 7942 / FACHB-805</strain>
    </source>
</reference>
<reference key="2">
    <citation type="submission" date="2005-08" db="EMBL/GenBank/DDBJ databases">
        <title>Complete sequence of chromosome 1 of Synechococcus elongatus PCC 7942.</title>
        <authorList>
            <consortium name="US DOE Joint Genome Institute"/>
            <person name="Copeland A."/>
            <person name="Lucas S."/>
            <person name="Lapidus A."/>
            <person name="Barry K."/>
            <person name="Detter J.C."/>
            <person name="Glavina T."/>
            <person name="Hammon N."/>
            <person name="Israni S."/>
            <person name="Pitluck S."/>
            <person name="Schmutz J."/>
            <person name="Larimer F."/>
            <person name="Land M."/>
            <person name="Kyrpides N."/>
            <person name="Lykidis A."/>
            <person name="Golden S."/>
            <person name="Richardson P."/>
        </authorList>
    </citation>
    <scope>NUCLEOTIDE SEQUENCE [LARGE SCALE GENOMIC DNA]</scope>
    <source>
        <strain>ATCC 33912 / PCC 7942 / FACHB-805</strain>
    </source>
</reference>
<organism>
    <name type="scientific">Synechococcus elongatus (strain ATCC 33912 / PCC 7942 / FACHB-805)</name>
    <name type="common">Anacystis nidulans R2</name>
    <dbReference type="NCBI Taxonomy" id="1140"/>
    <lineage>
        <taxon>Bacteria</taxon>
        <taxon>Bacillati</taxon>
        <taxon>Cyanobacteriota</taxon>
        <taxon>Cyanophyceae</taxon>
        <taxon>Synechococcales</taxon>
        <taxon>Synechococcaceae</taxon>
        <taxon>Synechococcus</taxon>
    </lineage>
</organism>
<comment type="function">
    <text evidence="1">Probably a ribosomal protein or a ribosome-associated protein.</text>
</comment>
<comment type="subunit">
    <text evidence="3">Part of the 30S ribosomal subunit.</text>
</comment>
<comment type="similarity">
    <text evidence="3">Belongs to the chloroplast-specific ribosomal protein cS23 family.</text>
</comment>
<sequence length="112" mass="12764">MIGTSAKHGWEVGLSRFTIKILWLNENVAIAVDQVVGKATSPLTAYYFWPRHDAWEQLKTELESKSWITEAERVELLNQATEVINYWQEEGKGKPLAQAQARFPELVFTGSN</sequence>
<accession>O05161</accession>
<accession>Q31KP4</accession>
<name>RRP3_SYNE7</name>
<protein>
    <recommendedName>
        <fullName evidence="2">Probable small ribosomal subunit protein cS23</fullName>
    </recommendedName>
    <alternativeName>
        <fullName>Probable 30S ribosomal protein PSRP-3</fullName>
    </alternativeName>
    <alternativeName>
        <fullName>Ycf65-like protein</fullName>
    </alternativeName>
</protein>
<gene>
    <name type="primary">mut3G</name>
    <name type="ordered locus">Synpcc7942_2345</name>
</gene>
<feature type="chain" id="PRO_0000216753" description="Probable small ribosomal subunit protein cS23">
    <location>
        <begin position="1"/>
        <end position="112"/>
    </location>
</feature>